<feature type="chain" id="PRO_0000363314" description="Probable protein phosphatase 2C 67">
    <location>
        <begin position="1"/>
        <end position="367"/>
    </location>
</feature>
<feature type="domain" description="PPM-type phosphatase" evidence="2">
    <location>
        <begin position="91"/>
        <end position="365"/>
    </location>
</feature>
<feature type="region of interest" description="Disordered" evidence="3">
    <location>
        <begin position="1"/>
        <end position="79"/>
    </location>
</feature>
<feature type="compositionally biased region" description="Basic and acidic residues" evidence="3">
    <location>
        <begin position="31"/>
        <end position="46"/>
    </location>
</feature>
<feature type="binding site" evidence="1">
    <location>
        <position position="131"/>
    </location>
    <ligand>
        <name>Mn(2+)</name>
        <dbReference type="ChEBI" id="CHEBI:29035"/>
        <label>1</label>
    </ligand>
</feature>
<feature type="binding site" evidence="1">
    <location>
        <position position="131"/>
    </location>
    <ligand>
        <name>Mn(2+)</name>
        <dbReference type="ChEBI" id="CHEBI:29035"/>
        <label>2</label>
    </ligand>
</feature>
<feature type="binding site" evidence="1">
    <location>
        <position position="132"/>
    </location>
    <ligand>
        <name>Mn(2+)</name>
        <dbReference type="ChEBI" id="CHEBI:29035"/>
        <label>1</label>
    </ligand>
</feature>
<feature type="binding site" evidence="1">
    <location>
        <position position="312"/>
    </location>
    <ligand>
        <name>Mn(2+)</name>
        <dbReference type="ChEBI" id="CHEBI:29035"/>
        <label>2</label>
    </ligand>
</feature>
<feature type="binding site" evidence="1">
    <location>
        <position position="356"/>
    </location>
    <ligand>
        <name>Mn(2+)</name>
        <dbReference type="ChEBI" id="CHEBI:29035"/>
        <label>2</label>
    </ligand>
</feature>
<sequence length="367" mass="39390">MAHQKREATSDNGGGDEEWASKRPKVVGAAAEKEHILTSDASHETNGDEAQGGDASRKENTVSTNPCVSDEKAATNSNVSSGHGVILTSVEADAAEDKGCRHTMEDAWVLLPDASMESPGNLRCAHFAIYDGHGGRLAAEYAQKHLHQNVIAAGLPRELMDVKAAKKAIIEGFRRTDECLLQESTKGNWQDGATAVCVWVLGQTVVVANAGDAKAVLARSTSADGEGAVDDAKSQLKAIVLTREHKAIFPQERARIQKAGGSVGPNGRLQGRIEVSRALGDRQFKKVGLIATPDVHSFEVTRKDHFIILGCDGLWGVFGPGDAVEFVQNQLKETSSATLAVRRLVKEAVRERRCKDNCTAVLIVFKH</sequence>
<dbReference type="EC" id="3.1.3.16"/>
<dbReference type="EMBL" id="AP008215">
    <property type="protein sequence ID" value="BAF24754.1"/>
    <property type="molecule type" value="Genomic_DNA"/>
</dbReference>
<dbReference type="EMBL" id="AP014965">
    <property type="status" value="NOT_ANNOTATED_CDS"/>
    <property type="molecule type" value="Genomic_DNA"/>
</dbReference>
<dbReference type="EMBL" id="AK064380">
    <property type="status" value="NOT_ANNOTATED_CDS"/>
    <property type="molecule type" value="mRNA"/>
</dbReference>
<dbReference type="RefSeq" id="XP_015651230.1">
    <property type="nucleotide sequence ID" value="XM_015795744.1"/>
</dbReference>
<dbReference type="SMR" id="Q0J2R1"/>
<dbReference type="FunCoup" id="Q0J2R1">
    <property type="interactions" value="976"/>
</dbReference>
<dbReference type="STRING" id="39947.Q0J2R1"/>
<dbReference type="PaxDb" id="39947-Q0J2R1"/>
<dbReference type="KEGG" id="dosa:Os09g0314400"/>
<dbReference type="eggNOG" id="KOG0698">
    <property type="taxonomic scope" value="Eukaryota"/>
</dbReference>
<dbReference type="HOGENOM" id="CLU_013173_1_2_1"/>
<dbReference type="InParanoid" id="Q0J2R1"/>
<dbReference type="OrthoDB" id="10264738at2759"/>
<dbReference type="Proteomes" id="UP000000763">
    <property type="component" value="Chromosome 9"/>
</dbReference>
<dbReference type="Proteomes" id="UP000059680">
    <property type="component" value="Chromosome 9"/>
</dbReference>
<dbReference type="GO" id="GO:0046872">
    <property type="term" value="F:metal ion binding"/>
    <property type="evidence" value="ECO:0007669"/>
    <property type="project" value="UniProtKB-KW"/>
</dbReference>
<dbReference type="GO" id="GO:0004722">
    <property type="term" value="F:protein serine/threonine phosphatase activity"/>
    <property type="evidence" value="ECO:0007669"/>
    <property type="project" value="UniProtKB-EC"/>
</dbReference>
<dbReference type="GO" id="GO:0007165">
    <property type="term" value="P:signal transduction"/>
    <property type="evidence" value="ECO:0000318"/>
    <property type="project" value="GO_Central"/>
</dbReference>
<dbReference type="CDD" id="cd00143">
    <property type="entry name" value="PP2Cc"/>
    <property type="match status" value="1"/>
</dbReference>
<dbReference type="FunFam" id="3.60.40.10:FF:000061">
    <property type="entry name" value="Probable protein phosphatase 2C 67"/>
    <property type="match status" value="1"/>
</dbReference>
<dbReference type="Gene3D" id="3.60.40.10">
    <property type="entry name" value="PPM-type phosphatase domain"/>
    <property type="match status" value="1"/>
</dbReference>
<dbReference type="InterPro" id="IPR015655">
    <property type="entry name" value="PP2C"/>
</dbReference>
<dbReference type="InterPro" id="IPR036457">
    <property type="entry name" value="PPM-type-like_dom_sf"/>
</dbReference>
<dbReference type="InterPro" id="IPR001932">
    <property type="entry name" value="PPM-type_phosphatase-like_dom"/>
</dbReference>
<dbReference type="PANTHER" id="PTHR47992">
    <property type="entry name" value="PROTEIN PHOSPHATASE"/>
    <property type="match status" value="1"/>
</dbReference>
<dbReference type="Pfam" id="PF00481">
    <property type="entry name" value="PP2C"/>
    <property type="match status" value="1"/>
</dbReference>
<dbReference type="SMART" id="SM00332">
    <property type="entry name" value="PP2Cc"/>
    <property type="match status" value="1"/>
</dbReference>
<dbReference type="SUPFAM" id="SSF81606">
    <property type="entry name" value="PP2C-like"/>
    <property type="match status" value="1"/>
</dbReference>
<dbReference type="PROSITE" id="PS51746">
    <property type="entry name" value="PPM_2"/>
    <property type="match status" value="1"/>
</dbReference>
<reference key="1">
    <citation type="journal article" date="2005" name="Nature">
        <title>The map-based sequence of the rice genome.</title>
        <authorList>
            <consortium name="International rice genome sequencing project (IRGSP)"/>
        </authorList>
    </citation>
    <scope>NUCLEOTIDE SEQUENCE [LARGE SCALE GENOMIC DNA]</scope>
    <source>
        <strain>cv. Nipponbare</strain>
    </source>
</reference>
<reference key="2">
    <citation type="journal article" date="2008" name="Nucleic Acids Res.">
        <title>The rice annotation project database (RAP-DB): 2008 update.</title>
        <authorList>
            <consortium name="The rice annotation project (RAP)"/>
        </authorList>
    </citation>
    <scope>GENOME REANNOTATION</scope>
    <source>
        <strain>cv. Nipponbare</strain>
    </source>
</reference>
<reference key="3">
    <citation type="journal article" date="2013" name="Rice">
        <title>Improvement of the Oryza sativa Nipponbare reference genome using next generation sequence and optical map data.</title>
        <authorList>
            <person name="Kawahara Y."/>
            <person name="de la Bastide M."/>
            <person name="Hamilton J.P."/>
            <person name="Kanamori H."/>
            <person name="McCombie W.R."/>
            <person name="Ouyang S."/>
            <person name="Schwartz D.C."/>
            <person name="Tanaka T."/>
            <person name="Wu J."/>
            <person name="Zhou S."/>
            <person name="Childs K.L."/>
            <person name="Davidson R.M."/>
            <person name="Lin H."/>
            <person name="Quesada-Ocampo L."/>
            <person name="Vaillancourt B."/>
            <person name="Sakai H."/>
            <person name="Lee S.S."/>
            <person name="Kim J."/>
            <person name="Numa H."/>
            <person name="Itoh T."/>
            <person name="Buell C.R."/>
            <person name="Matsumoto T."/>
        </authorList>
    </citation>
    <scope>GENOME REANNOTATION</scope>
    <source>
        <strain>cv. Nipponbare</strain>
    </source>
</reference>
<reference key="4">
    <citation type="journal article" date="2003" name="Science">
        <title>Collection, mapping, and annotation of over 28,000 cDNA clones from japonica rice.</title>
        <authorList>
            <consortium name="The rice full-length cDNA consortium"/>
        </authorList>
    </citation>
    <scope>NUCLEOTIDE SEQUENCE [LARGE SCALE MRNA]</scope>
    <source>
        <strain>cv. Nipponbare</strain>
    </source>
</reference>
<reference key="5">
    <citation type="journal article" date="2008" name="BMC Genomics">
        <title>Genome-wide and expression analysis of protein phosphatase 2C in rice and Arabidopsis.</title>
        <authorList>
            <person name="Xue T."/>
            <person name="Wang D."/>
            <person name="Zhang S."/>
            <person name="Ehlting J."/>
            <person name="Ni F."/>
            <person name="Jacab S."/>
            <person name="Zheng C."/>
            <person name="Zhong Y."/>
        </authorList>
    </citation>
    <scope>GENE FAMILY</scope>
    <scope>NOMENCLATURE</scope>
</reference>
<keyword id="KW-0378">Hydrolase</keyword>
<keyword id="KW-0460">Magnesium</keyword>
<keyword id="KW-0464">Manganese</keyword>
<keyword id="KW-0479">Metal-binding</keyword>
<keyword id="KW-0904">Protein phosphatase</keyword>
<keyword id="KW-1185">Reference proteome</keyword>
<accession>Q0J2R1</accession>
<protein>
    <recommendedName>
        <fullName>Probable protein phosphatase 2C 67</fullName>
        <shortName>OsPP2C67</shortName>
        <ecNumber>3.1.3.16</ecNumber>
    </recommendedName>
</protein>
<comment type="catalytic activity">
    <reaction>
        <text>O-phospho-L-seryl-[protein] + H2O = L-seryl-[protein] + phosphate</text>
        <dbReference type="Rhea" id="RHEA:20629"/>
        <dbReference type="Rhea" id="RHEA-COMP:9863"/>
        <dbReference type="Rhea" id="RHEA-COMP:11604"/>
        <dbReference type="ChEBI" id="CHEBI:15377"/>
        <dbReference type="ChEBI" id="CHEBI:29999"/>
        <dbReference type="ChEBI" id="CHEBI:43474"/>
        <dbReference type="ChEBI" id="CHEBI:83421"/>
        <dbReference type="EC" id="3.1.3.16"/>
    </reaction>
</comment>
<comment type="catalytic activity">
    <reaction>
        <text>O-phospho-L-threonyl-[protein] + H2O = L-threonyl-[protein] + phosphate</text>
        <dbReference type="Rhea" id="RHEA:47004"/>
        <dbReference type="Rhea" id="RHEA-COMP:11060"/>
        <dbReference type="Rhea" id="RHEA-COMP:11605"/>
        <dbReference type="ChEBI" id="CHEBI:15377"/>
        <dbReference type="ChEBI" id="CHEBI:30013"/>
        <dbReference type="ChEBI" id="CHEBI:43474"/>
        <dbReference type="ChEBI" id="CHEBI:61977"/>
        <dbReference type="EC" id="3.1.3.16"/>
    </reaction>
</comment>
<comment type="cofactor">
    <cofactor evidence="1">
        <name>Mg(2+)</name>
        <dbReference type="ChEBI" id="CHEBI:18420"/>
    </cofactor>
    <cofactor evidence="1">
        <name>Mn(2+)</name>
        <dbReference type="ChEBI" id="CHEBI:29035"/>
    </cofactor>
    <text evidence="1">Binds 2 magnesium or manganese ions per subunit.</text>
</comment>
<comment type="similarity">
    <text evidence="4">Belongs to the PP2C family.</text>
</comment>
<comment type="sequence caution" evidence="4">
    <conflict type="erroneous termination">
        <sequence resource="EMBL" id="AK064380"/>
    </conflict>
    <text>Extended C-terminus.</text>
</comment>
<organism>
    <name type="scientific">Oryza sativa subsp. japonica</name>
    <name type="common">Rice</name>
    <dbReference type="NCBI Taxonomy" id="39947"/>
    <lineage>
        <taxon>Eukaryota</taxon>
        <taxon>Viridiplantae</taxon>
        <taxon>Streptophyta</taxon>
        <taxon>Embryophyta</taxon>
        <taxon>Tracheophyta</taxon>
        <taxon>Spermatophyta</taxon>
        <taxon>Magnoliopsida</taxon>
        <taxon>Liliopsida</taxon>
        <taxon>Poales</taxon>
        <taxon>Poaceae</taxon>
        <taxon>BOP clade</taxon>
        <taxon>Oryzoideae</taxon>
        <taxon>Oryzeae</taxon>
        <taxon>Oryzinae</taxon>
        <taxon>Oryza</taxon>
        <taxon>Oryza sativa</taxon>
    </lineage>
</organism>
<proteinExistence type="evidence at transcript level"/>
<gene>
    <name type="ordered locus">Os09g0314400</name>
    <name type="ordered locus">LOC_Os09g14540</name>
</gene>
<evidence type="ECO:0000250" key="1"/>
<evidence type="ECO:0000255" key="2">
    <source>
        <dbReference type="PROSITE-ProRule" id="PRU01082"/>
    </source>
</evidence>
<evidence type="ECO:0000256" key="3">
    <source>
        <dbReference type="SAM" id="MobiDB-lite"/>
    </source>
</evidence>
<evidence type="ECO:0000305" key="4"/>
<name>P2C67_ORYSJ</name>